<protein>
    <recommendedName>
        <fullName evidence="1">4-hydroxy-tetrahydrodipicolinate reductase</fullName>
        <shortName evidence="1">HTPA reductase</shortName>
        <ecNumber evidence="1">1.17.1.8</ecNumber>
    </recommendedName>
</protein>
<feature type="chain" id="PRO_1000008556" description="4-hydroxy-tetrahydrodipicolinate reductase">
    <location>
        <begin position="1"/>
        <end position="277"/>
    </location>
</feature>
<feature type="region of interest" description="Disordered" evidence="2">
    <location>
        <begin position="154"/>
        <end position="173"/>
    </location>
</feature>
<feature type="region of interest" description="Disordered" evidence="2">
    <location>
        <begin position="247"/>
        <end position="277"/>
    </location>
</feature>
<feature type="compositionally biased region" description="Low complexity" evidence="2">
    <location>
        <begin position="250"/>
        <end position="265"/>
    </location>
</feature>
<feature type="active site" description="Proton donor/acceptor" evidence="1">
    <location>
        <position position="132"/>
    </location>
</feature>
<feature type="active site" description="Proton donor" evidence="1">
    <location>
        <position position="136"/>
    </location>
</feature>
<feature type="binding site" evidence="1">
    <location>
        <begin position="9"/>
        <end position="14"/>
    </location>
    <ligand>
        <name>NAD(+)</name>
        <dbReference type="ChEBI" id="CHEBI:57540"/>
    </ligand>
</feature>
<feature type="binding site" evidence="1">
    <location>
        <position position="37"/>
    </location>
    <ligand>
        <name>NADP(+)</name>
        <dbReference type="ChEBI" id="CHEBI:58349"/>
    </ligand>
</feature>
<feature type="binding site" evidence="1">
    <location>
        <begin position="75"/>
        <end position="77"/>
    </location>
    <ligand>
        <name>NAD(+)</name>
        <dbReference type="ChEBI" id="CHEBI:57540"/>
    </ligand>
</feature>
<feature type="binding site" evidence="1">
    <location>
        <begin position="142"/>
        <end position="143"/>
    </location>
    <ligand>
        <name>(S)-2,3,4,5-tetrahydrodipicolinate</name>
        <dbReference type="ChEBI" id="CHEBI:16845"/>
    </ligand>
</feature>
<dbReference type="EC" id="1.17.1.8" evidence="1"/>
<dbReference type="EMBL" id="AM711867">
    <property type="protein sequence ID" value="CAN02103.1"/>
    <property type="molecule type" value="Genomic_DNA"/>
</dbReference>
<dbReference type="RefSeq" id="WP_012038727.1">
    <property type="nucleotide sequence ID" value="NC_009480.1"/>
</dbReference>
<dbReference type="SMR" id="A5CSN2"/>
<dbReference type="KEGG" id="cmi:CMM_2040"/>
<dbReference type="eggNOG" id="COG0289">
    <property type="taxonomic scope" value="Bacteria"/>
</dbReference>
<dbReference type="HOGENOM" id="CLU_047479_0_1_11"/>
<dbReference type="OrthoDB" id="9790352at2"/>
<dbReference type="UniPathway" id="UPA00034">
    <property type="reaction ID" value="UER00018"/>
</dbReference>
<dbReference type="Proteomes" id="UP000001564">
    <property type="component" value="Chromosome"/>
</dbReference>
<dbReference type="GO" id="GO:0005829">
    <property type="term" value="C:cytosol"/>
    <property type="evidence" value="ECO:0007669"/>
    <property type="project" value="TreeGrafter"/>
</dbReference>
<dbReference type="GO" id="GO:0008839">
    <property type="term" value="F:4-hydroxy-tetrahydrodipicolinate reductase"/>
    <property type="evidence" value="ECO:0007669"/>
    <property type="project" value="UniProtKB-EC"/>
</dbReference>
<dbReference type="GO" id="GO:0051287">
    <property type="term" value="F:NAD binding"/>
    <property type="evidence" value="ECO:0007669"/>
    <property type="project" value="UniProtKB-UniRule"/>
</dbReference>
<dbReference type="GO" id="GO:0050661">
    <property type="term" value="F:NADP binding"/>
    <property type="evidence" value="ECO:0007669"/>
    <property type="project" value="UniProtKB-UniRule"/>
</dbReference>
<dbReference type="GO" id="GO:0016726">
    <property type="term" value="F:oxidoreductase activity, acting on CH or CH2 groups, NAD or NADP as acceptor"/>
    <property type="evidence" value="ECO:0007669"/>
    <property type="project" value="UniProtKB-UniRule"/>
</dbReference>
<dbReference type="GO" id="GO:0019877">
    <property type="term" value="P:diaminopimelate biosynthetic process"/>
    <property type="evidence" value="ECO:0007669"/>
    <property type="project" value="UniProtKB-UniRule"/>
</dbReference>
<dbReference type="GO" id="GO:0009089">
    <property type="term" value="P:lysine biosynthetic process via diaminopimelate"/>
    <property type="evidence" value="ECO:0007669"/>
    <property type="project" value="UniProtKB-UniRule"/>
</dbReference>
<dbReference type="CDD" id="cd02274">
    <property type="entry name" value="DHDPR_N"/>
    <property type="match status" value="1"/>
</dbReference>
<dbReference type="FunFam" id="3.30.360.10:FF:000009">
    <property type="entry name" value="4-hydroxy-tetrahydrodipicolinate reductase"/>
    <property type="match status" value="1"/>
</dbReference>
<dbReference type="Gene3D" id="3.30.360.10">
    <property type="entry name" value="Dihydrodipicolinate Reductase, domain 2"/>
    <property type="match status" value="1"/>
</dbReference>
<dbReference type="Gene3D" id="3.40.50.720">
    <property type="entry name" value="NAD(P)-binding Rossmann-like Domain"/>
    <property type="match status" value="1"/>
</dbReference>
<dbReference type="HAMAP" id="MF_00102">
    <property type="entry name" value="DapB"/>
    <property type="match status" value="1"/>
</dbReference>
<dbReference type="InterPro" id="IPR022663">
    <property type="entry name" value="DapB_C"/>
</dbReference>
<dbReference type="InterPro" id="IPR000846">
    <property type="entry name" value="DapB_N"/>
</dbReference>
<dbReference type="InterPro" id="IPR022664">
    <property type="entry name" value="DapB_N_CS"/>
</dbReference>
<dbReference type="InterPro" id="IPR023940">
    <property type="entry name" value="DHDPR_bac"/>
</dbReference>
<dbReference type="InterPro" id="IPR036291">
    <property type="entry name" value="NAD(P)-bd_dom_sf"/>
</dbReference>
<dbReference type="NCBIfam" id="TIGR00036">
    <property type="entry name" value="dapB"/>
    <property type="match status" value="1"/>
</dbReference>
<dbReference type="PANTHER" id="PTHR20836:SF0">
    <property type="entry name" value="4-HYDROXY-TETRAHYDRODIPICOLINATE REDUCTASE 1, CHLOROPLASTIC-RELATED"/>
    <property type="match status" value="1"/>
</dbReference>
<dbReference type="PANTHER" id="PTHR20836">
    <property type="entry name" value="DIHYDRODIPICOLINATE REDUCTASE"/>
    <property type="match status" value="1"/>
</dbReference>
<dbReference type="Pfam" id="PF05173">
    <property type="entry name" value="DapB_C"/>
    <property type="match status" value="1"/>
</dbReference>
<dbReference type="Pfam" id="PF01113">
    <property type="entry name" value="DapB_N"/>
    <property type="match status" value="1"/>
</dbReference>
<dbReference type="PIRSF" id="PIRSF000161">
    <property type="entry name" value="DHPR"/>
    <property type="match status" value="1"/>
</dbReference>
<dbReference type="SUPFAM" id="SSF55347">
    <property type="entry name" value="Glyceraldehyde-3-phosphate dehydrogenase-like, C-terminal domain"/>
    <property type="match status" value="1"/>
</dbReference>
<dbReference type="SUPFAM" id="SSF51735">
    <property type="entry name" value="NAD(P)-binding Rossmann-fold domains"/>
    <property type="match status" value="1"/>
</dbReference>
<dbReference type="PROSITE" id="PS01298">
    <property type="entry name" value="DAPB"/>
    <property type="match status" value="1"/>
</dbReference>
<keyword id="KW-0028">Amino-acid biosynthesis</keyword>
<keyword id="KW-0963">Cytoplasm</keyword>
<keyword id="KW-0220">Diaminopimelate biosynthesis</keyword>
<keyword id="KW-0457">Lysine biosynthesis</keyword>
<keyword id="KW-0520">NAD</keyword>
<keyword id="KW-0521">NADP</keyword>
<keyword id="KW-0560">Oxidoreductase</keyword>
<comment type="function">
    <text evidence="1">Catalyzes the conversion of 4-hydroxy-tetrahydrodipicolinate (HTPA) to tetrahydrodipicolinate.</text>
</comment>
<comment type="catalytic activity">
    <reaction evidence="1">
        <text>(S)-2,3,4,5-tetrahydrodipicolinate + NAD(+) + H2O = (2S,4S)-4-hydroxy-2,3,4,5-tetrahydrodipicolinate + NADH + H(+)</text>
        <dbReference type="Rhea" id="RHEA:35323"/>
        <dbReference type="ChEBI" id="CHEBI:15377"/>
        <dbReference type="ChEBI" id="CHEBI:15378"/>
        <dbReference type="ChEBI" id="CHEBI:16845"/>
        <dbReference type="ChEBI" id="CHEBI:57540"/>
        <dbReference type="ChEBI" id="CHEBI:57945"/>
        <dbReference type="ChEBI" id="CHEBI:67139"/>
        <dbReference type="EC" id="1.17.1.8"/>
    </reaction>
</comment>
<comment type="catalytic activity">
    <reaction evidence="1">
        <text>(S)-2,3,4,5-tetrahydrodipicolinate + NADP(+) + H2O = (2S,4S)-4-hydroxy-2,3,4,5-tetrahydrodipicolinate + NADPH + H(+)</text>
        <dbReference type="Rhea" id="RHEA:35331"/>
        <dbReference type="ChEBI" id="CHEBI:15377"/>
        <dbReference type="ChEBI" id="CHEBI:15378"/>
        <dbReference type="ChEBI" id="CHEBI:16845"/>
        <dbReference type="ChEBI" id="CHEBI:57783"/>
        <dbReference type="ChEBI" id="CHEBI:58349"/>
        <dbReference type="ChEBI" id="CHEBI:67139"/>
        <dbReference type="EC" id="1.17.1.8"/>
    </reaction>
</comment>
<comment type="pathway">
    <text evidence="1">Amino-acid biosynthesis; L-lysine biosynthesis via DAP pathway; (S)-tetrahydrodipicolinate from L-aspartate: step 4/4.</text>
</comment>
<comment type="subcellular location">
    <subcellularLocation>
        <location evidence="1">Cytoplasm</location>
    </subcellularLocation>
</comment>
<comment type="similarity">
    <text evidence="1">Belongs to the DapB family.</text>
</comment>
<comment type="caution">
    <text evidence="3">Was originally thought to be a dihydrodipicolinate reductase (DHDPR), catalyzing the conversion of dihydrodipicolinate to tetrahydrodipicolinate. However, it was shown in E.coli that the substrate of the enzymatic reaction is not dihydrodipicolinate (DHDP) but in fact (2S,4S)-4-hydroxy-2,3,4,5-tetrahydrodipicolinic acid (HTPA), the product released by the DapA-catalyzed reaction.</text>
</comment>
<accession>A5CSN2</accession>
<sequence>MTTTVAVVGATGRMGQLISQIVEASTEFELVASLDSKDELSDMLGADIAVDVTLPAVSQGVVEYAVAHGMNVLVGTSGWTGERITELERRITGKLAVGVVIIPNFSVGSVLATSFAQMAARFYDSIEIVEAHGASKIDSPSGTAVRTAELMSQARGARGPVQAPHTDQRARGQQVASIPVHSLRMQGVVAKQDVVFGGNGEVLTISHDTLAPSAYEAGILLALRATRTARGVVVGLDRLIDLDGSRERAAQAAAGDAPSGPVDDGGPSGQAATVTSA</sequence>
<organism>
    <name type="scientific">Clavibacter michiganensis subsp. michiganensis (strain NCPPB 382)</name>
    <dbReference type="NCBI Taxonomy" id="443906"/>
    <lineage>
        <taxon>Bacteria</taxon>
        <taxon>Bacillati</taxon>
        <taxon>Actinomycetota</taxon>
        <taxon>Actinomycetes</taxon>
        <taxon>Micrococcales</taxon>
        <taxon>Microbacteriaceae</taxon>
        <taxon>Clavibacter</taxon>
    </lineage>
</organism>
<name>DAPB_CLAM3</name>
<gene>
    <name evidence="1" type="primary">dapB</name>
    <name type="ordered locus">CMM_2040</name>
</gene>
<proteinExistence type="inferred from homology"/>
<evidence type="ECO:0000255" key="1">
    <source>
        <dbReference type="HAMAP-Rule" id="MF_00102"/>
    </source>
</evidence>
<evidence type="ECO:0000256" key="2">
    <source>
        <dbReference type="SAM" id="MobiDB-lite"/>
    </source>
</evidence>
<evidence type="ECO:0000305" key="3"/>
<reference key="1">
    <citation type="journal article" date="2008" name="J. Bacteriol.">
        <title>The genome sequence of the tomato-pathogenic actinomycete Clavibacter michiganensis subsp. michiganensis NCPPB382 reveals a large island involved in pathogenicity.</title>
        <authorList>
            <person name="Gartemann K.-H."/>
            <person name="Abt B."/>
            <person name="Bekel T."/>
            <person name="Burger A."/>
            <person name="Engemann J."/>
            <person name="Fluegel M."/>
            <person name="Gaigalat L."/>
            <person name="Goesmann A."/>
            <person name="Graefen I."/>
            <person name="Kalinowski J."/>
            <person name="Kaup O."/>
            <person name="Kirchner O."/>
            <person name="Krause L."/>
            <person name="Linke B."/>
            <person name="McHardy A."/>
            <person name="Meyer F."/>
            <person name="Pohle S."/>
            <person name="Rueckert C."/>
            <person name="Schneiker S."/>
            <person name="Zellermann E.-M."/>
            <person name="Puehler A."/>
            <person name="Eichenlaub R."/>
            <person name="Kaiser O."/>
            <person name="Bartels D."/>
        </authorList>
    </citation>
    <scope>NUCLEOTIDE SEQUENCE [LARGE SCALE GENOMIC DNA]</scope>
    <source>
        <strain>NCPPB 382</strain>
    </source>
</reference>